<keyword id="KW-1015">Disulfide bond</keyword>
<keyword id="KW-0325">Glycoprotein</keyword>
<keyword id="KW-1038">Host endoplasmic reticulum</keyword>
<keyword id="KW-1040">Host Golgi apparatus</keyword>
<keyword id="KW-1043">Host membrane</keyword>
<keyword id="KW-0945">Host-virus interaction</keyword>
<keyword id="KW-1090">Inhibition of host innate immune response by virus</keyword>
<keyword id="KW-1225">Inhibition of host TLR pathway by virus</keyword>
<keyword id="KW-0426">Late protein</keyword>
<keyword id="KW-0433">Leucine-rich repeat</keyword>
<keyword id="KW-0472">Membrane</keyword>
<keyword id="KW-0732">Signal</keyword>
<keyword id="KW-0812">Transmembrane</keyword>
<keyword id="KW-1133">Transmembrane helix</keyword>
<keyword id="KW-0899">Viral immunoevasion</keyword>
<sequence>MLRVFIFFVFLGSGLAGRIKPQITCKYFISENNTWYKYNVTILNGTIVLPAYNMIPTKAAGISCTCHDIDYLQKNNISIHYNTSILKTFQDIRIIRCGMKNISEIAGGFGKELKFLDLRYNNLQFIDYNILRKLIRSNTPTYLYYNNLMCGKRNCPLYYFLLKQEQTYLKLLPQFFLRRISFSNNNTYLYHFLSCGNKPGHEFLEYQTKYCRTKFPEINITVNQLITKKNTERYKNCYPFVLVSILCSCISFLFLIICLLRSICKKYSCTKQGKSTHKYIPLIPSYTFSLKKHRHPETAVVEDHTTTANSPIVYIPTTEEKKASCSRRK</sequence>
<proteinExistence type="inferred from homology"/>
<accession>P0CAE4</accession>
<organismHost>
    <name type="scientific">Ornithodoros</name>
    <name type="common">relapsing fever ticks</name>
    <dbReference type="NCBI Taxonomy" id="6937"/>
</organismHost>
<organismHost>
    <name type="scientific">Phacochoerus aethiopicus</name>
    <name type="common">Warthog</name>
    <dbReference type="NCBI Taxonomy" id="85517"/>
</organismHost>
<organismHost>
    <name type="scientific">Phacochoerus africanus</name>
    <name type="common">Warthog</name>
    <dbReference type="NCBI Taxonomy" id="41426"/>
</organismHost>
<organismHost>
    <name type="scientific">Potamochoerus larvatus</name>
    <name type="common">Bushpig</name>
    <dbReference type="NCBI Taxonomy" id="273792"/>
</organismHost>
<organismHost>
    <name type="scientific">Sus scrofa</name>
    <name type="common">Pig</name>
    <dbReference type="NCBI Taxonomy" id="9823"/>
</organismHost>
<gene>
    <name type="ordered locus">Mal-149</name>
</gene>
<comment type="function">
    <text evidence="1">Viral TLR3 homolog that probably prevents TLR3 dimerization and subsequent induction of IFN (By similarity). Inhibits dsRNA-stimulated activation of NF-kB and IRF3 (By similarity).</text>
</comment>
<comment type="subcellular location">
    <subcellularLocation>
        <location evidence="1">Host endoplasmic reticulum membrane</location>
        <topology evidence="3">Single-pass type I membrane protein</topology>
    </subcellularLocation>
    <subcellularLocation>
        <location>Host Golgi apparatus membrane</location>
        <topology evidence="3">Single-pass type I membrane protein</topology>
    </subcellularLocation>
</comment>
<comment type="induction">
    <text evidence="3">Expressed in the late phase of the viral replicative cycle.</text>
</comment>
<comment type="domain">
    <text evidence="1">Contains putative leucine-rich repeats (LRR) and a C-terminus cysteine-rich capping motif similar to domain structure of host TLR3.</text>
</comment>
<comment type="PTM">
    <text evidence="1">Highly glycosylated.</text>
</comment>
<comment type="similarity">
    <text evidence="3">Belongs to the asfivirus I329L family.</text>
</comment>
<protein>
    <recommendedName>
        <fullName>Transmembrane protein I329L</fullName>
    </recommendedName>
</protein>
<dbReference type="EMBL" id="AY261361">
    <property type="status" value="NOT_ANNOTATED_CDS"/>
    <property type="molecule type" value="Genomic_DNA"/>
</dbReference>
<dbReference type="SMR" id="P0CAE4"/>
<dbReference type="Proteomes" id="UP000000860">
    <property type="component" value="Segment"/>
</dbReference>
<dbReference type="GO" id="GO:0044167">
    <property type="term" value="C:host cell endoplasmic reticulum membrane"/>
    <property type="evidence" value="ECO:0007669"/>
    <property type="project" value="UniProtKB-SubCell"/>
</dbReference>
<dbReference type="GO" id="GO:0044178">
    <property type="term" value="C:host cell Golgi membrane"/>
    <property type="evidence" value="ECO:0007669"/>
    <property type="project" value="UniProtKB-SubCell"/>
</dbReference>
<dbReference type="GO" id="GO:0016020">
    <property type="term" value="C:membrane"/>
    <property type="evidence" value="ECO:0007669"/>
    <property type="project" value="UniProtKB-KW"/>
</dbReference>
<dbReference type="GO" id="GO:0052170">
    <property type="term" value="P:symbiont-mediated suppression of host innate immune response"/>
    <property type="evidence" value="ECO:0007669"/>
    <property type="project" value="UniProtKB-KW"/>
</dbReference>
<dbReference type="GO" id="GO:0039722">
    <property type="term" value="P:symbiont-mediated suppression of host toll-like receptor signaling pathway"/>
    <property type="evidence" value="ECO:0007669"/>
    <property type="project" value="UniProtKB-KW"/>
</dbReference>
<dbReference type="Gene3D" id="3.80.10.10">
    <property type="entry name" value="Ribonuclease Inhibitor"/>
    <property type="match status" value="1"/>
</dbReference>
<dbReference type="InterPro" id="IPR032675">
    <property type="entry name" value="LRR_dom_sf"/>
</dbReference>
<dbReference type="SUPFAM" id="SSF52058">
    <property type="entry name" value="L domain-like"/>
    <property type="match status" value="1"/>
</dbReference>
<organism>
    <name type="scientific">African swine fever virus (isolate Tick/Malawi/Lil 20-1/1983)</name>
    <name type="common">ASFV</name>
    <dbReference type="NCBI Taxonomy" id="10500"/>
    <lineage>
        <taxon>Viruses</taxon>
        <taxon>Varidnaviria</taxon>
        <taxon>Bamfordvirae</taxon>
        <taxon>Nucleocytoviricota</taxon>
        <taxon>Pokkesviricetes</taxon>
        <taxon>Asfuvirales</taxon>
        <taxon>Asfarviridae</taxon>
        <taxon>Asfivirus</taxon>
        <taxon>African swine fever virus</taxon>
    </lineage>
</organism>
<reference key="1">
    <citation type="submission" date="2003-03" db="EMBL/GenBank/DDBJ databases">
        <title>African swine fever virus genomes.</title>
        <authorList>
            <person name="Kutish G.F."/>
            <person name="Rock D.L."/>
        </authorList>
    </citation>
    <scope>NUCLEOTIDE SEQUENCE [LARGE SCALE GENOMIC DNA]</scope>
</reference>
<feature type="signal peptide" evidence="2">
    <location>
        <begin position="1"/>
        <end position="31"/>
    </location>
</feature>
<feature type="chain" id="PRO_0000373650" description="Transmembrane protein I329L">
    <location>
        <begin position="32"/>
        <end position="329"/>
    </location>
</feature>
<feature type="topological domain" description="Extracellular" evidence="2">
    <location>
        <begin position="32"/>
        <end position="239"/>
    </location>
</feature>
<feature type="transmembrane region" description="Helical" evidence="2">
    <location>
        <begin position="240"/>
        <end position="260"/>
    </location>
</feature>
<feature type="topological domain" description="Cytoplasmic">
    <location>
        <begin position="261"/>
        <end position="329"/>
    </location>
</feature>
<feature type="repeat" description="LRR" evidence="1">
    <location>
        <begin position="112"/>
        <end position="133"/>
    </location>
</feature>
<feature type="glycosylation site" description="N-linked (GlcNAc...) asparagine; by host" evidence="2">
    <location>
        <position position="32"/>
    </location>
</feature>
<feature type="glycosylation site" description="N-linked (GlcNAc...) asparagine; by host" evidence="2">
    <location>
        <position position="39"/>
    </location>
</feature>
<feature type="glycosylation site" description="N-linked (GlcNAc...) asparagine; by host" evidence="2">
    <location>
        <position position="44"/>
    </location>
</feature>
<feature type="glycosylation site" description="N-linked (GlcNAc...) asparagine; by host" evidence="2">
    <location>
        <position position="76"/>
    </location>
</feature>
<feature type="glycosylation site" description="N-linked (GlcNAc...) asparagine; by host" evidence="2">
    <location>
        <position position="82"/>
    </location>
</feature>
<feature type="glycosylation site" description="N-linked (GlcNAc...) asparagine; by host" evidence="2">
    <location>
        <position position="101"/>
    </location>
</feature>
<feature type="glycosylation site" description="N-linked (GlcNAc...) asparagine; by host" evidence="2">
    <location>
        <position position="185"/>
    </location>
</feature>
<feature type="glycosylation site" description="N-linked (GlcNAc...) asparagine; by host" evidence="2">
    <location>
        <position position="219"/>
    </location>
</feature>
<feature type="disulfide bond" evidence="1">
    <location>
        <begin position="195"/>
        <end position="237"/>
    </location>
</feature>
<name>I329L_ASFM2</name>
<evidence type="ECO:0000250" key="1">
    <source>
        <dbReference type="UniProtKB" id="P27945"/>
    </source>
</evidence>
<evidence type="ECO:0000255" key="2"/>
<evidence type="ECO:0000305" key="3"/>